<organism>
    <name type="scientific">Rattus norvegicus</name>
    <name type="common">Rat</name>
    <dbReference type="NCBI Taxonomy" id="10116"/>
    <lineage>
        <taxon>Eukaryota</taxon>
        <taxon>Metazoa</taxon>
        <taxon>Chordata</taxon>
        <taxon>Craniata</taxon>
        <taxon>Vertebrata</taxon>
        <taxon>Euteleostomi</taxon>
        <taxon>Mammalia</taxon>
        <taxon>Eutheria</taxon>
        <taxon>Euarchontoglires</taxon>
        <taxon>Glires</taxon>
        <taxon>Rodentia</taxon>
        <taxon>Myomorpha</taxon>
        <taxon>Muroidea</taxon>
        <taxon>Muridae</taxon>
        <taxon>Murinae</taxon>
        <taxon>Rattus</taxon>
    </lineage>
</organism>
<reference key="1">
    <citation type="journal article" date="2003" name="J. Biochem.">
        <title>Two mitofusin proteins, mammalian homologues of FZO, with distinct functions are both required for mitochondrial fusion.</title>
        <authorList>
            <person name="Eura Y."/>
            <person name="Ishihara N."/>
            <person name="Yokota S."/>
            <person name="Mihara K."/>
        </authorList>
    </citation>
    <scope>NUCLEOTIDE SEQUENCE [MRNA]</scope>
    <scope>FUNCTION</scope>
    <scope>SUBCELLULAR LOCATION</scope>
    <scope>TISSUE SPECIFICITY</scope>
    <scope>MULTIMERIZATION</scope>
    <scope>SUBUNIT</scope>
    <scope>MUTAGENESIS OF LYS-109</scope>
    <source>
        <tissue>Liver</tissue>
    </source>
</reference>
<reference key="2">
    <citation type="journal article" date="2004" name="Nat. Cell Biol.">
        <title>Dysregulation of HSG triggers vascular proliferative disorders.</title>
        <authorList>
            <person name="Chen K.-H."/>
            <person name="Guo X."/>
            <person name="Ma D."/>
            <person name="Guo Y."/>
            <person name="Li Q."/>
            <person name="Yang D."/>
            <person name="Li P."/>
            <person name="Qiu X."/>
            <person name="Wen S."/>
            <person name="Xiao R.-P."/>
            <person name="Tang J."/>
        </authorList>
    </citation>
    <scope>NUCLEOTIDE SEQUENCE [MRNA]</scope>
    <scope>FUNCTION</scope>
    <scope>SUBCELLULAR LOCATION</scope>
    <scope>TISSUE SPECIFICITY</scope>
    <source>
        <strain>SHR</strain>
        <strain>Wistar Kyoto</strain>
        <tissue>Aorta</tissue>
    </source>
</reference>
<reference key="3">
    <citation type="journal article" date="2003" name="Biochem. Biophys. Res. Commun.">
        <title>Regulation of mitochondrial morphology by membrane potential, and DRP1-dependent division and FZO1-dependent fusion reaction in mammalian cells.</title>
        <authorList>
            <person name="Ishihara N."/>
            <person name="Jofuku A."/>
            <person name="Eura Y."/>
            <person name="Mihara K."/>
        </authorList>
    </citation>
    <scope>FUNCTION</scope>
</reference>
<reference key="4">
    <citation type="journal article" date="2003" name="Biochem. Biophys. Res. Commun.">
        <title>Stage-specific enhanced expression of mitochondrial fusion and fission factors during spermatogenesis in rat testis.</title>
        <authorList>
            <person name="Honda S."/>
            <person name="Hirose S."/>
        </authorList>
    </citation>
    <scope>TISSUE SPECIFICITY</scope>
</reference>
<reference key="5">
    <citation type="journal article" date="2003" name="J. Biol. Chem.">
        <title>Mitofusin-2 determines mitochondrial network architecture and mitochondrial metabolism. A novel regulatory mechanism altered in obesity.</title>
        <authorList>
            <person name="Bach D."/>
            <person name="Pich S."/>
            <person name="Soriano F.X."/>
            <person name="Vega N."/>
            <person name="Baumgartner B."/>
            <person name="Oriola J."/>
            <person name="Daugaard J.R."/>
            <person name="Lloberas J."/>
            <person name="Camps M."/>
            <person name="Zierath J.R."/>
            <person name="Rabasa-Lhoret R."/>
            <person name="Wallberg-Henriksson H."/>
            <person name="Laville M."/>
            <person name="Palacin M."/>
            <person name="Vidal H."/>
            <person name="Rivera F."/>
            <person name="Brand M."/>
            <person name="Zorzano A."/>
        </authorList>
    </citation>
    <scope>FUNCTION</scope>
</reference>
<reference key="6">
    <citation type="journal article" date="2006" name="J. Cell Sci.">
        <title>Identification of a novel protein that regulates mitochondrial fusion by modulating mitofusin (Mfn) protein function.</title>
        <authorList>
            <person name="Eura Y."/>
            <person name="Ishihara N."/>
            <person name="Oka T."/>
            <person name="Mihara K."/>
        </authorList>
    </citation>
    <scope>INTERACTION WITH VAT1</scope>
</reference>
<gene>
    <name type="primary">Mfn2</name>
    <name type="synonym">Fzo1a</name>
</gene>
<protein>
    <recommendedName>
        <fullName>Mitofusin-2</fullName>
        <ecNumber evidence="1">3.6.5.-</ecNumber>
    </recommendedName>
    <alternativeName>
        <fullName>Mitochondrial transmembrane GTPase FZO1A</fullName>
        <shortName>Protein HSG</shortName>
    </alternativeName>
    <alternativeName>
        <fullName>Transmembrane GTPase MFN2</fullName>
    </alternativeName>
</protein>
<evidence type="ECO:0000250" key="1">
    <source>
        <dbReference type="UniProtKB" id="O95140"/>
    </source>
</evidence>
<evidence type="ECO:0000250" key="2">
    <source>
        <dbReference type="UniProtKB" id="Q80U63"/>
    </source>
</evidence>
<evidence type="ECO:0000250" key="3">
    <source>
        <dbReference type="UniProtKB" id="Q8IWA4"/>
    </source>
</evidence>
<evidence type="ECO:0000255" key="4"/>
<evidence type="ECO:0000255" key="5">
    <source>
        <dbReference type="PROSITE-ProRule" id="PRU01055"/>
    </source>
</evidence>
<evidence type="ECO:0000269" key="6">
    <source>
    </source>
</evidence>
<evidence type="ECO:0000269" key="7">
    <source>
    </source>
</evidence>
<evidence type="ECO:0000269" key="8">
    <source>
    </source>
</evidence>
<evidence type="ECO:0000269" key="9">
    <source>
    </source>
</evidence>
<evidence type="ECO:0000269" key="10">
    <source>
    </source>
</evidence>
<evidence type="ECO:0000269" key="11">
    <source>
    </source>
</evidence>
<evidence type="ECO:0000305" key="12"/>
<accession>Q8R500</accession>
<accession>O09013</accession>
<keyword id="KW-0053">Apoptosis</keyword>
<keyword id="KW-0072">Autophagy</keyword>
<keyword id="KW-0175">Coiled coil</keyword>
<keyword id="KW-0342">GTP-binding</keyword>
<keyword id="KW-0378">Hydrolase</keyword>
<keyword id="KW-0472">Membrane</keyword>
<keyword id="KW-0496">Mitochondrion</keyword>
<keyword id="KW-1000">Mitochondrion outer membrane</keyword>
<keyword id="KW-0547">Nucleotide-binding</keyword>
<keyword id="KW-0597">Phosphoprotein</keyword>
<keyword id="KW-1185">Reference proteome</keyword>
<keyword id="KW-0812">Transmembrane</keyword>
<keyword id="KW-1133">Transmembrane helix</keyword>
<keyword id="KW-0832">Ubl conjugation</keyword>
<keyword id="KW-0834">Unfolded protein response</keyword>
<sequence length="757" mass="86123">MSLLFSRCNSIVTVKKDKRHMAEVNASPLKHFVTAKKKINGIFEQLGAYIQESAGFLEDTHRNTELDPVTTEEQVLDVKGYLSKVRGISEVLARRHMKVAFFGRTSNGKSTVINAMLWDKVLPSGIGHTTNCFLRVGGTDGHEAFLLTEGSEEKKSVKTVNQLAHALHQDEQLHAGSLVSVMWPNSKCPLLKDGLVLMDSPGIDVTTELDSWIDKFCLDADVFVLVANSESTLMQTEKQFFHKVSERLSRPNIFILNNRWDASASEPEYMEEVRRQHMERCTSFLVDELGVVDRAQAGDRIFFVSAKEVLSARVQKAQGMPEGGGALAEGFQVRMFEFQNFERRFEECISQSAVKTKFEQHTVRAKQIAEAVRLIMDSLHIAAQEQRVYCLEMREERQDRLRFIDKQLELLAQDYKLRIKQMTEEVERQVSTAMAEEIRRLSVLVDEYQMDFHPSPVVLKVYKNELHRHIEEGLGRNMSDRCSTAIASSLQTMQQDMIDGLKPLLPVSVRNQIDMLVPRQCFSLSYDLNCDKLCADFQEDIEFHFSLGWTMLVNRFLGPKNSRRALLGYNDQVQRPLPLTPANPSMPPLPQGSLTQEELMVSMVTGLASLTSRTSMGILVVGGVVWKAVGWRLIALSFGLYGLLYVYERLTWTTRAKERAFKRQFVEYASEKLQLIISYTGSNCSHQVQQELSGTFAHLCQQVDITRDNLEQEIAAMNKKVEALDSLQSKAKLLRNKAGWLDSELNMFIHQYLQPSR</sequence>
<dbReference type="EC" id="3.6.5.-" evidence="1"/>
<dbReference type="EMBL" id="AB084165">
    <property type="protein sequence ID" value="BAB90982.1"/>
    <property type="molecule type" value="mRNA"/>
</dbReference>
<dbReference type="EMBL" id="U41803">
    <property type="protein sequence ID" value="AAB87720.3"/>
    <property type="molecule type" value="mRNA"/>
</dbReference>
<dbReference type="SMR" id="Q8R500"/>
<dbReference type="FunCoup" id="Q8R500">
    <property type="interactions" value="2957"/>
</dbReference>
<dbReference type="STRING" id="10116.ENSRNOP00000059463"/>
<dbReference type="iPTMnet" id="Q8R500"/>
<dbReference type="PhosphoSitePlus" id="Q8R500"/>
<dbReference type="PaxDb" id="10116-ENSRNOP00000052539"/>
<dbReference type="ABCD" id="Q8R500">
    <property type="antibodies" value="1 sequenced antibody"/>
</dbReference>
<dbReference type="AGR" id="RGD:628843"/>
<dbReference type="RGD" id="628843">
    <property type="gene designation" value="Mfn2"/>
</dbReference>
<dbReference type="eggNOG" id="KOG0448">
    <property type="taxonomic scope" value="Eukaryota"/>
</dbReference>
<dbReference type="InParanoid" id="Q8R500"/>
<dbReference type="PhylomeDB" id="Q8R500"/>
<dbReference type="Reactome" id="R-RNO-5205685">
    <property type="pathway name" value="PINK1-PRKN Mediated Mitophagy"/>
</dbReference>
<dbReference type="Reactome" id="R-RNO-9013419">
    <property type="pathway name" value="RHOT2 GTPase cycle"/>
</dbReference>
<dbReference type="Reactome" id="R-RNO-983231">
    <property type="pathway name" value="Factors involved in megakaryocyte development and platelet production"/>
</dbReference>
<dbReference type="PRO" id="PR:Q8R500"/>
<dbReference type="Proteomes" id="UP000002494">
    <property type="component" value="Unplaced"/>
</dbReference>
<dbReference type="GO" id="GO:0005829">
    <property type="term" value="C:cytosol"/>
    <property type="evidence" value="ECO:0000314"/>
    <property type="project" value="UniProtKB"/>
</dbReference>
<dbReference type="GO" id="GO:0015630">
    <property type="term" value="C:microtubule cytoskeleton"/>
    <property type="evidence" value="ECO:0000266"/>
    <property type="project" value="RGD"/>
</dbReference>
<dbReference type="GO" id="GO:0005741">
    <property type="term" value="C:mitochondrial outer membrane"/>
    <property type="evidence" value="ECO:0000314"/>
    <property type="project" value="UniProtKB"/>
</dbReference>
<dbReference type="GO" id="GO:0005739">
    <property type="term" value="C:mitochondrion"/>
    <property type="evidence" value="ECO:0000266"/>
    <property type="project" value="RGD"/>
</dbReference>
<dbReference type="GO" id="GO:0005525">
    <property type="term" value="F:GTP binding"/>
    <property type="evidence" value="ECO:0000315"/>
    <property type="project" value="RGD"/>
</dbReference>
<dbReference type="GO" id="GO:0003924">
    <property type="term" value="F:GTPase activity"/>
    <property type="evidence" value="ECO:0000318"/>
    <property type="project" value="GO_Central"/>
</dbReference>
<dbReference type="GO" id="GO:0051020">
    <property type="term" value="F:GTPase binding"/>
    <property type="evidence" value="ECO:0000314"/>
    <property type="project" value="RGD"/>
</dbReference>
<dbReference type="GO" id="GO:0042802">
    <property type="term" value="F:identical protein binding"/>
    <property type="evidence" value="ECO:0000353"/>
    <property type="project" value="RGD"/>
</dbReference>
<dbReference type="GO" id="GO:0043394">
    <property type="term" value="F:proteoglycan binding"/>
    <property type="evidence" value="ECO:0000353"/>
    <property type="project" value="RGD"/>
</dbReference>
<dbReference type="GO" id="GO:0031267">
    <property type="term" value="F:small GTPase binding"/>
    <property type="evidence" value="ECO:0000314"/>
    <property type="project" value="RGD"/>
</dbReference>
<dbReference type="GO" id="GO:0031625">
    <property type="term" value="F:ubiquitin protein ligase binding"/>
    <property type="evidence" value="ECO:0000266"/>
    <property type="project" value="RGD"/>
</dbReference>
<dbReference type="GO" id="GO:0009060">
    <property type="term" value="P:aerobic respiration"/>
    <property type="evidence" value="ECO:0000250"/>
    <property type="project" value="UniProtKB"/>
</dbReference>
<dbReference type="GO" id="GO:0006915">
    <property type="term" value="P:apoptotic process"/>
    <property type="evidence" value="ECO:0007669"/>
    <property type="project" value="UniProtKB-KW"/>
</dbReference>
<dbReference type="GO" id="GO:0001825">
    <property type="term" value="P:blastocyst formation"/>
    <property type="evidence" value="ECO:0000266"/>
    <property type="project" value="RGD"/>
</dbReference>
<dbReference type="GO" id="GO:0048593">
    <property type="term" value="P:camera-type eye morphogenesis"/>
    <property type="evidence" value="ECO:0000266"/>
    <property type="project" value="RGD"/>
</dbReference>
<dbReference type="GO" id="GO:0071549">
    <property type="term" value="P:cellular response to dexamethasone stimulus"/>
    <property type="evidence" value="ECO:0000270"/>
    <property type="project" value="RGD"/>
</dbReference>
<dbReference type="GO" id="GO:0071333">
    <property type="term" value="P:cellular response to glucose stimulus"/>
    <property type="evidence" value="ECO:0000270"/>
    <property type="project" value="RGD"/>
</dbReference>
<dbReference type="GO" id="GO:0071456">
    <property type="term" value="P:cellular response to hypoxia"/>
    <property type="evidence" value="ECO:0000270"/>
    <property type="project" value="RGD"/>
</dbReference>
<dbReference type="GO" id="GO:0071479">
    <property type="term" value="P:cellular response to ionizing radiation"/>
    <property type="evidence" value="ECO:0000270"/>
    <property type="project" value="RGD"/>
</dbReference>
<dbReference type="GO" id="GO:1905232">
    <property type="term" value="P:cellular response to L-glutamate"/>
    <property type="evidence" value="ECO:0000270"/>
    <property type="project" value="RGD"/>
</dbReference>
<dbReference type="GO" id="GO:0071404">
    <property type="term" value="P:cellular response to low-density lipoprotein particle stimulus"/>
    <property type="evidence" value="ECO:0000270"/>
    <property type="project" value="RGD"/>
</dbReference>
<dbReference type="GO" id="GO:0071287">
    <property type="term" value="P:cellular response to manganese ion"/>
    <property type="evidence" value="ECO:0000270"/>
    <property type="project" value="RGD"/>
</dbReference>
<dbReference type="GO" id="GO:0072705">
    <property type="term" value="P:cellular response to mercaptoethanol"/>
    <property type="evidence" value="ECO:0000270"/>
    <property type="project" value="RGD"/>
</dbReference>
<dbReference type="GO" id="GO:0071394">
    <property type="term" value="P:cellular response to testosterone stimulus"/>
    <property type="evidence" value="ECO:0000270"/>
    <property type="project" value="RGD"/>
</dbReference>
<dbReference type="GO" id="GO:0048312">
    <property type="term" value="P:intracellular distribution of mitochondria"/>
    <property type="evidence" value="ECO:0000315"/>
    <property type="project" value="RGD"/>
</dbReference>
<dbReference type="GO" id="GO:0008584">
    <property type="term" value="P:male gonad development"/>
    <property type="evidence" value="ECO:0000270"/>
    <property type="project" value="RGD"/>
</dbReference>
<dbReference type="GO" id="GO:0051560">
    <property type="term" value="P:mitochondrial calcium ion homeostasis"/>
    <property type="evidence" value="ECO:0000315"/>
    <property type="project" value="RGD"/>
</dbReference>
<dbReference type="GO" id="GO:0008053">
    <property type="term" value="P:mitochondrial fusion"/>
    <property type="evidence" value="ECO:0000315"/>
    <property type="project" value="RGD"/>
</dbReference>
<dbReference type="GO" id="GO:0007006">
    <property type="term" value="P:mitochondrial membrane organization"/>
    <property type="evidence" value="ECO:0000250"/>
    <property type="project" value="UniProtKB"/>
</dbReference>
<dbReference type="GO" id="GO:0051646">
    <property type="term" value="P:mitochondrion localization"/>
    <property type="evidence" value="ECO:0000266"/>
    <property type="project" value="RGD"/>
</dbReference>
<dbReference type="GO" id="GO:0007005">
    <property type="term" value="P:mitochondrion organization"/>
    <property type="evidence" value="ECO:0000315"/>
    <property type="project" value="RGD"/>
</dbReference>
<dbReference type="GO" id="GO:0010667">
    <property type="term" value="P:negative regulation of cardiac muscle cell apoptotic process"/>
    <property type="evidence" value="ECO:0000315"/>
    <property type="project" value="RGD"/>
</dbReference>
<dbReference type="GO" id="GO:0045786">
    <property type="term" value="P:negative regulation of cell cycle"/>
    <property type="evidence" value="ECO:0000315"/>
    <property type="project" value="RGD"/>
</dbReference>
<dbReference type="GO" id="GO:0008285">
    <property type="term" value="P:negative regulation of cell population proliferation"/>
    <property type="evidence" value="ECO:0000315"/>
    <property type="project" value="RGD"/>
</dbReference>
<dbReference type="GO" id="GO:0045792">
    <property type="term" value="P:negative regulation of cell size"/>
    <property type="evidence" value="ECO:0000315"/>
    <property type="project" value="RGD"/>
</dbReference>
<dbReference type="GO" id="GO:0060253">
    <property type="term" value="P:negative regulation of glial cell proliferation"/>
    <property type="evidence" value="ECO:0000315"/>
    <property type="project" value="RGD"/>
</dbReference>
<dbReference type="GO" id="GO:0090258">
    <property type="term" value="P:negative regulation of mitochondrial fission"/>
    <property type="evidence" value="ECO:0000315"/>
    <property type="project" value="RGD"/>
</dbReference>
<dbReference type="GO" id="GO:0046580">
    <property type="term" value="P:negative regulation of Ras protein signal transduction"/>
    <property type="evidence" value="ECO:0000266"/>
    <property type="project" value="RGD"/>
</dbReference>
<dbReference type="GO" id="GO:1903427">
    <property type="term" value="P:negative regulation of reactive oxygen species biosynthetic process"/>
    <property type="evidence" value="ECO:0000315"/>
    <property type="project" value="RGD"/>
</dbReference>
<dbReference type="GO" id="GO:0090201">
    <property type="term" value="P:negative regulation of release of cytochrome c from mitochondria"/>
    <property type="evidence" value="ECO:0000315"/>
    <property type="project" value="RGD"/>
</dbReference>
<dbReference type="GO" id="GO:0060299">
    <property type="term" value="P:negative regulation of sarcomere organization"/>
    <property type="evidence" value="ECO:0000315"/>
    <property type="project" value="RGD"/>
</dbReference>
<dbReference type="GO" id="GO:0048662">
    <property type="term" value="P:negative regulation of smooth muscle cell proliferation"/>
    <property type="evidence" value="ECO:0000314"/>
    <property type="project" value="UniProtKB"/>
</dbReference>
<dbReference type="GO" id="GO:1904706">
    <property type="term" value="P:negative regulation of vascular associated smooth muscle cell proliferation"/>
    <property type="evidence" value="ECO:0000315"/>
    <property type="project" value="RGD"/>
</dbReference>
<dbReference type="GO" id="GO:1901857">
    <property type="term" value="P:positive regulation of cellular respiration"/>
    <property type="evidence" value="ECO:0000315"/>
    <property type="project" value="RGD"/>
</dbReference>
<dbReference type="GO" id="GO:0120162">
    <property type="term" value="P:positive regulation of cold-induced thermogenesis"/>
    <property type="evidence" value="ECO:0000250"/>
    <property type="project" value="YuBioLab"/>
</dbReference>
<dbReference type="GO" id="GO:0046326">
    <property type="term" value="P:positive regulation of D-glucose import"/>
    <property type="evidence" value="ECO:0000315"/>
    <property type="project" value="RGD"/>
</dbReference>
<dbReference type="GO" id="GO:0061003">
    <property type="term" value="P:positive regulation of dendritic spine morphogenesis"/>
    <property type="evidence" value="ECO:0000315"/>
    <property type="project" value="RGD"/>
</dbReference>
<dbReference type="GO" id="GO:2000866">
    <property type="term" value="P:positive regulation of estradiol secretion"/>
    <property type="evidence" value="ECO:0000315"/>
    <property type="project" value="RGD"/>
</dbReference>
<dbReference type="GO" id="GO:0010628">
    <property type="term" value="P:positive regulation of gene expression"/>
    <property type="evidence" value="ECO:0000315"/>
    <property type="project" value="RGD"/>
</dbReference>
<dbReference type="GO" id="GO:0010729">
    <property type="term" value="P:positive regulation of hydrogen peroxide biosynthetic process"/>
    <property type="evidence" value="ECO:0000315"/>
    <property type="project" value="RGD"/>
</dbReference>
<dbReference type="GO" id="GO:0046628">
    <property type="term" value="P:positive regulation of insulin receptor signaling pathway"/>
    <property type="evidence" value="ECO:0000315"/>
    <property type="project" value="RGD"/>
</dbReference>
<dbReference type="GO" id="GO:0010918">
    <property type="term" value="P:positive regulation of mitochondrial membrane potential"/>
    <property type="evidence" value="ECO:0000315"/>
    <property type="project" value="RGD"/>
</dbReference>
<dbReference type="GO" id="GO:2000386">
    <property type="term" value="P:positive regulation of ovarian follicle development"/>
    <property type="evidence" value="ECO:0000315"/>
    <property type="project" value="RGD"/>
</dbReference>
<dbReference type="GO" id="GO:2000872">
    <property type="term" value="P:positive regulation of progesterone secretion"/>
    <property type="evidence" value="ECO:0000315"/>
    <property type="project" value="RGD"/>
</dbReference>
<dbReference type="GO" id="GO:1903428">
    <property type="term" value="P:positive regulation of reactive oxygen species biosynthetic process"/>
    <property type="evidence" value="ECO:0000315"/>
    <property type="project" value="RGD"/>
</dbReference>
<dbReference type="GO" id="GO:1905461">
    <property type="term" value="P:positive regulation of vascular associated smooth muscle cell apoptotic process"/>
    <property type="evidence" value="ECO:0000266"/>
    <property type="project" value="RGD"/>
</dbReference>
<dbReference type="GO" id="GO:1904707">
    <property type="term" value="P:positive regulation of vascular associated smooth muscle cell proliferation"/>
    <property type="evidence" value="ECO:0000266"/>
    <property type="project" value="RGD"/>
</dbReference>
<dbReference type="GO" id="GO:0034497">
    <property type="term" value="P:protein localization to phagophore assembly site"/>
    <property type="evidence" value="ECO:0000266"/>
    <property type="project" value="RGD"/>
</dbReference>
<dbReference type="GO" id="GO:0006626">
    <property type="term" value="P:protein targeting to mitochondrion"/>
    <property type="evidence" value="ECO:0000250"/>
    <property type="project" value="UniProtKB"/>
</dbReference>
<dbReference type="GO" id="GO:0048678">
    <property type="term" value="P:response to axon injury"/>
    <property type="evidence" value="ECO:0000270"/>
    <property type="project" value="RGD"/>
</dbReference>
<dbReference type="GO" id="GO:0046686">
    <property type="term" value="P:response to cadmium ion"/>
    <property type="evidence" value="ECO:0000270"/>
    <property type="project" value="RGD"/>
</dbReference>
<dbReference type="GO" id="GO:0051592">
    <property type="term" value="P:response to calcium ion"/>
    <property type="evidence" value="ECO:0000270"/>
    <property type="project" value="RGD"/>
</dbReference>
<dbReference type="GO" id="GO:1905377">
    <property type="term" value="P:response to D-galactose"/>
    <property type="evidence" value="ECO:0000270"/>
    <property type="project" value="RGD"/>
</dbReference>
<dbReference type="GO" id="GO:0051602">
    <property type="term" value="P:response to electrical stimulus"/>
    <property type="evidence" value="ECO:0000270"/>
    <property type="project" value="RGD"/>
</dbReference>
<dbReference type="GO" id="GO:0070542">
    <property type="term" value="P:response to fatty acid"/>
    <property type="evidence" value="ECO:0000270"/>
    <property type="project" value="RGD"/>
</dbReference>
<dbReference type="GO" id="GO:1905395">
    <property type="term" value="P:response to flavonoid"/>
    <property type="evidence" value="ECO:0000270"/>
    <property type="project" value="RGD"/>
</dbReference>
<dbReference type="GO" id="GO:1990910">
    <property type="term" value="P:response to hypobaric hypoxia"/>
    <property type="evidence" value="ECO:0000270"/>
    <property type="project" value="RGD"/>
</dbReference>
<dbReference type="GO" id="GO:1903576">
    <property type="term" value="P:response to L-arginine"/>
    <property type="evidence" value="ECO:0000270"/>
    <property type="project" value="RGD"/>
</dbReference>
<dbReference type="GO" id="GO:0014850">
    <property type="term" value="P:response to muscle activity"/>
    <property type="evidence" value="ECO:0000270"/>
    <property type="project" value="RGD"/>
</dbReference>
<dbReference type="GO" id="GO:0031667">
    <property type="term" value="P:response to nutrient levels"/>
    <property type="evidence" value="ECO:0000270"/>
    <property type="project" value="RGD"/>
</dbReference>
<dbReference type="GO" id="GO:0033574">
    <property type="term" value="P:response to testosterone"/>
    <property type="evidence" value="ECO:0000270"/>
    <property type="project" value="RGD"/>
</dbReference>
<dbReference type="GO" id="GO:0006986">
    <property type="term" value="P:response to unfolded protein"/>
    <property type="evidence" value="ECO:0007669"/>
    <property type="project" value="UniProtKB-KW"/>
</dbReference>
<dbReference type="GO" id="GO:0007283">
    <property type="term" value="P:spermatogenesis"/>
    <property type="evidence" value="ECO:0000270"/>
    <property type="project" value="RGD"/>
</dbReference>
<dbReference type="GO" id="GO:0061734">
    <property type="term" value="P:type 2 mitophagy"/>
    <property type="evidence" value="ECO:0000266"/>
    <property type="project" value="RGD"/>
</dbReference>
<dbReference type="CDD" id="cd09912">
    <property type="entry name" value="DLP_2"/>
    <property type="match status" value="1"/>
</dbReference>
<dbReference type="FunFam" id="1.20.5.110:FF:000012">
    <property type="entry name" value="Mitofusin 2"/>
    <property type="match status" value="1"/>
</dbReference>
<dbReference type="FunFam" id="3.40.50.300:FF:000214">
    <property type="entry name" value="Mitofusin 2"/>
    <property type="match status" value="1"/>
</dbReference>
<dbReference type="Gene3D" id="1.20.5.110">
    <property type="match status" value="1"/>
</dbReference>
<dbReference type="Gene3D" id="3.40.50.300">
    <property type="entry name" value="P-loop containing nucleotide triphosphate hydrolases"/>
    <property type="match status" value="1"/>
</dbReference>
<dbReference type="InterPro" id="IPR045063">
    <property type="entry name" value="Dynamin_N"/>
</dbReference>
<dbReference type="InterPro" id="IPR006884">
    <property type="entry name" value="Fzo/mitofusin_HR2"/>
</dbReference>
<dbReference type="InterPro" id="IPR030381">
    <property type="entry name" value="G_DYNAMIN_dom"/>
</dbReference>
<dbReference type="InterPro" id="IPR027094">
    <property type="entry name" value="Mitofusin_fam"/>
</dbReference>
<dbReference type="InterPro" id="IPR027417">
    <property type="entry name" value="P-loop_NTPase"/>
</dbReference>
<dbReference type="PANTHER" id="PTHR10465:SF1">
    <property type="entry name" value="MITOFUSIN-2"/>
    <property type="match status" value="1"/>
</dbReference>
<dbReference type="PANTHER" id="PTHR10465">
    <property type="entry name" value="TRANSMEMBRANE GTPASE FZO1"/>
    <property type="match status" value="1"/>
</dbReference>
<dbReference type="Pfam" id="PF00350">
    <property type="entry name" value="Dynamin_N"/>
    <property type="match status" value="1"/>
</dbReference>
<dbReference type="Pfam" id="PF04799">
    <property type="entry name" value="Fzo_mitofusin"/>
    <property type="match status" value="1"/>
</dbReference>
<dbReference type="SUPFAM" id="SSF111479">
    <property type="entry name" value="Fzo-like conserved region"/>
    <property type="match status" value="1"/>
</dbReference>
<dbReference type="SUPFAM" id="SSF52540">
    <property type="entry name" value="P-loop containing nucleoside triphosphate hydrolases"/>
    <property type="match status" value="1"/>
</dbReference>
<dbReference type="PROSITE" id="PS51718">
    <property type="entry name" value="G_DYNAMIN_2"/>
    <property type="match status" value="1"/>
</dbReference>
<proteinExistence type="evidence at protein level"/>
<name>MFN2_RAT</name>
<comment type="function">
    <text evidence="1 2 6 7 8 10">Mitochondrial outer membrane GTPase that mediates mitochondrial clustering and fusion (PubMed:12589796, PubMed:12598526, PubMed:14561718, PubMed:15322553). Mitochondria are highly dynamic organelles, and their morphology is determined by the equilibrium between mitochondrial fusion and fission events. Overexpression induces the formation of mitochondrial networks. Membrane clustering requires GTPase activity and may involve a major rearrangement of the coiled coil domains (By similarity). Plays a central role in mitochondrial metabolism and may be associated with obesity and/or apoptosis processes (PubMed:12598526). Plays an important role in the regulation of vascular smooth muscle cell proliferation (PubMed:15322553). Involved in the clearance of damaged mitochondria via selective autophagy (mitophagy). Is required for PRKN recruitment to dysfunctional mitochondria (By similarity). Involved in the control of unfolded protein response (UPR) upon ER stress including activation of apoptosis and autophagy during ER stress (By similarity). Acts as an upstream regulator of EIF2AK3 and suppresses EIF2AK3 activation under basal conditions (By similarity).</text>
</comment>
<comment type="catalytic activity">
    <reaction evidence="1">
        <text>GTP + H2O = GDP + phosphate + H(+)</text>
        <dbReference type="Rhea" id="RHEA:19669"/>
        <dbReference type="ChEBI" id="CHEBI:15377"/>
        <dbReference type="ChEBI" id="CHEBI:15378"/>
        <dbReference type="ChEBI" id="CHEBI:37565"/>
        <dbReference type="ChEBI" id="CHEBI:43474"/>
        <dbReference type="ChEBI" id="CHEBI:58189"/>
    </reaction>
    <physiologicalReaction direction="left-to-right" evidence="1">
        <dbReference type="Rhea" id="RHEA:19670"/>
    </physiologicalReaction>
</comment>
<comment type="subunit">
    <text evidence="1 2 8 11 12">Forms homomultimers and heteromultimers with MFN1 (PubMed:14561718). Oligomerization is essential for mitochondrion fusion (Probable). Interacts with VAT1 (PubMed:17105775). Interacts with STOML2; may form heterooligomers (By similarity). Interacts (phosphorylated) with PRKN (By similarity). Interacts with EIF2AK3 (By similarity). Interacts with THG1L; THG1L probably functions as a guanyl-nucleotide exchange factor/GEF, activating MFN2.</text>
</comment>
<comment type="subcellular location">
    <subcellularLocation>
        <location evidence="8 10">Mitochondrion outer membrane</location>
        <topology evidence="8">Multi-pass membrane protein</topology>
    </subcellularLocation>
    <text evidence="1">Colocalizes with BAX during apoptosis.</text>
</comment>
<comment type="tissue specificity">
    <text evidence="8 9 10">Ubiquitous. In brain, it is more expressed than MFN1, while it is expressed at a weaker level than MFN1 in heart and testis. Expressed at high level in elongating spermatids of seminiferous tubules. Expression is markedly down-regulated in highly proliferative vascular smooth muscle cells (VSMCs) from the genetic hypertensive animal model SHR, as well as in balloon-injured Wistar Kyoto arteries.</text>
</comment>
<comment type="domain">
    <text evidence="3">A helix bundle is formed by helices from the N-terminal and the C-terminal part of the protein. The GTPase domain cannot be expressed by itself, without the helix bundle. Rearrangement of the helix bundle and/or of the coiled coil domains may bring membranes from adjacent mitochondria into close contact, and thereby play a role in mitochondrial fusion.</text>
</comment>
<comment type="PTM">
    <text evidence="1">Phosphorylated by PINK1.</text>
</comment>
<comment type="PTM">
    <text evidence="1">Ubiquitinated by non-degradative ubiquitin by PRKN, promoting mitochondrial fusion; deubiquitination by USP30 inhibits mitochondrial fusion (By similarity). Ubiquitinated by HUWE1 when dietary stearate (C18:0) levels are low; ubiquitination inhibits mitochondrial fusion (By similarity).</text>
</comment>
<comment type="similarity">
    <text evidence="5">Belongs to the TRAFAC class dynamin-like GTPase superfamily. Dynamin/Fzo/YdjA family. Mitofusin subfamily.</text>
</comment>
<feature type="chain" id="PRO_0000127677" description="Mitofusin-2">
    <location>
        <begin position="1"/>
        <end position="757"/>
    </location>
</feature>
<feature type="topological domain" description="Cytoplasmic" evidence="4">
    <location>
        <begin position="1"/>
        <end position="604"/>
    </location>
</feature>
<feature type="transmembrane region" description="Helical; Name=1" evidence="4">
    <location>
        <begin position="605"/>
        <end position="625"/>
    </location>
</feature>
<feature type="topological domain" description="Mitochondrial intermembrane" evidence="4">
    <location>
        <position position="626"/>
    </location>
</feature>
<feature type="transmembrane region" description="Helical; Name=2" evidence="4">
    <location>
        <begin position="627"/>
        <end position="647"/>
    </location>
</feature>
<feature type="topological domain" description="Cytoplasmic" evidence="4">
    <location>
        <begin position="648"/>
        <end position="757"/>
    </location>
</feature>
<feature type="domain" description="Dynamin-type G" evidence="5">
    <location>
        <begin position="93"/>
        <end position="342"/>
    </location>
</feature>
<feature type="region of interest" description="Part of a helix bundle domain, formed by helices from N-terminal and C-terminal regions" evidence="3">
    <location>
        <begin position="30"/>
        <end position="94"/>
    </location>
</feature>
<feature type="region of interest" description="G1 motif" evidence="5">
    <location>
        <begin position="103"/>
        <end position="110"/>
    </location>
</feature>
<feature type="region of interest" description="G2 motif" evidence="5">
    <location>
        <begin position="129"/>
        <end position="130"/>
    </location>
</feature>
<feature type="region of interest" description="G3 motif" evidence="5">
    <location>
        <begin position="199"/>
        <end position="202"/>
    </location>
</feature>
<feature type="region of interest" description="G4 motif" evidence="5">
    <location>
        <begin position="258"/>
        <end position="261"/>
    </location>
</feature>
<feature type="region of interest" description="G5 motif" evidence="5">
    <location>
        <position position="288"/>
    </location>
</feature>
<feature type="region of interest" description="Part of a helix bundle domain, formed by helices from N-terminal and C-terminal regions" evidence="3">
    <location>
        <begin position="359"/>
        <end position="385"/>
    </location>
</feature>
<feature type="region of interest" description="Part of a helix bundle domain, formed by helices from N-terminal and C-terminal regions" evidence="3">
    <location>
        <begin position="722"/>
        <end position="753"/>
    </location>
</feature>
<feature type="coiled-coil region" evidence="4">
    <location>
        <begin position="406"/>
        <end position="435"/>
    </location>
</feature>
<feature type="coiled-coil region" evidence="4">
    <location>
        <begin position="696"/>
        <end position="738"/>
    </location>
</feature>
<feature type="binding site" evidence="3">
    <location>
        <begin position="106"/>
        <end position="111"/>
    </location>
    <ligand>
        <name>GTP</name>
        <dbReference type="ChEBI" id="CHEBI:37565"/>
    </ligand>
</feature>
<feature type="binding site" evidence="3">
    <location>
        <begin position="258"/>
        <end position="261"/>
    </location>
    <ligand>
        <name>GTP</name>
        <dbReference type="ChEBI" id="CHEBI:37565"/>
    </ligand>
</feature>
<feature type="binding site" evidence="3">
    <location>
        <position position="305"/>
    </location>
    <ligand>
        <name>GTP</name>
        <dbReference type="ChEBI" id="CHEBI:37565"/>
    </ligand>
</feature>
<feature type="binding site" evidence="3">
    <location>
        <position position="307"/>
    </location>
    <ligand>
        <name>GTP</name>
        <dbReference type="ChEBI" id="CHEBI:37565"/>
    </ligand>
</feature>
<feature type="modified residue" description="Phosphothreonine; by PINK1" evidence="1">
    <location>
        <position position="111"/>
    </location>
</feature>
<feature type="modified residue" description="Phosphoserine; by PINK1" evidence="1">
    <location>
        <position position="442"/>
    </location>
</feature>
<feature type="mutagenesis site" description="Induces mitochondria fragmentation when overexpressed." evidence="8">
    <original>K</original>
    <variation>T</variation>
    <location>
        <position position="109"/>
    </location>
</feature>
<feature type="sequence conflict" description="In Ref. 2; AAB87720." evidence="12" ref="2">
    <original>W</original>
    <variation>L</variation>
    <location>
        <position position="183"/>
    </location>
</feature>
<feature type="sequence conflict" description="In Ref. 2; AAB87720." evidence="12" ref="2">
    <original>G</original>
    <variation>D</variation>
    <location>
        <position position="194"/>
    </location>
</feature>
<feature type="sequence conflict" description="In Ref. 2; AAB87720." evidence="12" ref="2">
    <original>S</original>
    <variation>P</variation>
    <location>
        <position position="265"/>
    </location>
</feature>
<feature type="sequence conflict" description="In Ref. 2; AAB87720." evidence="12" ref="2">
    <original>I</original>
    <variation>M</variation>
    <location>
        <position position="404"/>
    </location>
</feature>
<feature type="sequence conflict" description="In Ref. 2; AAB87720." evidence="12" ref="2">
    <original>S</original>
    <variation>T</variation>
    <location>
        <position position="431"/>
    </location>
</feature>
<feature type="sequence conflict" description="In Ref. 2; AAB87720." evidence="12" ref="2">
    <original>S</original>
    <variation>G</variation>
    <location>
        <position position="756"/>
    </location>
</feature>